<comment type="subcellular location">
    <subcellularLocation>
        <location evidence="1">Nucleus</location>
    </subcellularLocation>
</comment>
<comment type="similarity">
    <text evidence="4">Belongs to the BRX family.</text>
</comment>
<comment type="caution">
    <text evidence="4">This protein is shorter than the other members of the BRX family and is missing the second DZC domain. Some internal exons might be missing in this gene model prediction.</text>
</comment>
<organism>
    <name type="scientific">Oryza sativa subsp. japonica</name>
    <name type="common">Rice</name>
    <dbReference type="NCBI Taxonomy" id="39947"/>
    <lineage>
        <taxon>Eukaryota</taxon>
        <taxon>Viridiplantae</taxon>
        <taxon>Streptophyta</taxon>
        <taxon>Embryophyta</taxon>
        <taxon>Tracheophyta</taxon>
        <taxon>Spermatophyta</taxon>
        <taxon>Magnoliopsida</taxon>
        <taxon>Liliopsida</taxon>
        <taxon>Poales</taxon>
        <taxon>Poaceae</taxon>
        <taxon>BOP clade</taxon>
        <taxon>Oryzoideae</taxon>
        <taxon>Oryzeae</taxon>
        <taxon>Oryzinae</taxon>
        <taxon>Oryza</taxon>
        <taxon>Oryza sativa</taxon>
    </lineage>
</organism>
<evidence type="ECO:0000250" key="1"/>
<evidence type="ECO:0000255" key="2">
    <source>
        <dbReference type="PROSITE-ProRule" id="PRU00847"/>
    </source>
</evidence>
<evidence type="ECO:0000256" key="3">
    <source>
        <dbReference type="SAM" id="MobiDB-lite"/>
    </source>
</evidence>
<evidence type="ECO:0000305" key="4"/>
<keyword id="KW-0539">Nucleus</keyword>
<keyword id="KW-1185">Reference proteome</keyword>
<proteinExistence type="inferred from homology"/>
<reference key="1">
    <citation type="journal article" date="2002" name="Nature">
        <title>Sequence and analysis of rice chromosome 4.</title>
        <authorList>
            <person name="Feng Q."/>
            <person name="Zhang Y."/>
            <person name="Hao P."/>
            <person name="Wang S."/>
            <person name="Fu G."/>
            <person name="Huang Y."/>
            <person name="Li Y."/>
            <person name="Zhu J."/>
            <person name="Liu Y."/>
            <person name="Hu X."/>
            <person name="Jia P."/>
            <person name="Zhang Y."/>
            <person name="Zhao Q."/>
            <person name="Ying K."/>
            <person name="Yu S."/>
            <person name="Tang Y."/>
            <person name="Weng Q."/>
            <person name="Zhang L."/>
            <person name="Lu Y."/>
            <person name="Mu J."/>
            <person name="Lu Y."/>
            <person name="Zhang L.S."/>
            <person name="Yu Z."/>
            <person name="Fan D."/>
            <person name="Liu X."/>
            <person name="Lu T."/>
            <person name="Li C."/>
            <person name="Wu Y."/>
            <person name="Sun T."/>
            <person name="Lei H."/>
            <person name="Li T."/>
            <person name="Hu H."/>
            <person name="Guan J."/>
            <person name="Wu M."/>
            <person name="Zhang R."/>
            <person name="Zhou B."/>
            <person name="Chen Z."/>
            <person name="Chen L."/>
            <person name="Jin Z."/>
            <person name="Wang R."/>
            <person name="Yin H."/>
            <person name="Cai Z."/>
            <person name="Ren S."/>
            <person name="Lv G."/>
            <person name="Gu W."/>
            <person name="Zhu G."/>
            <person name="Tu Y."/>
            <person name="Jia J."/>
            <person name="Zhang Y."/>
            <person name="Chen J."/>
            <person name="Kang H."/>
            <person name="Chen X."/>
            <person name="Shao C."/>
            <person name="Sun Y."/>
            <person name="Hu Q."/>
            <person name="Zhang X."/>
            <person name="Zhang W."/>
            <person name="Wang L."/>
            <person name="Ding C."/>
            <person name="Sheng H."/>
            <person name="Gu J."/>
            <person name="Chen S."/>
            <person name="Ni L."/>
            <person name="Zhu F."/>
            <person name="Chen W."/>
            <person name="Lan L."/>
            <person name="Lai Y."/>
            <person name="Cheng Z."/>
            <person name="Gu M."/>
            <person name="Jiang J."/>
            <person name="Li J."/>
            <person name="Hong G."/>
            <person name="Xue Y."/>
            <person name="Han B."/>
        </authorList>
    </citation>
    <scope>NUCLEOTIDE SEQUENCE [LARGE SCALE GENOMIC DNA]</scope>
    <source>
        <strain>cv. Nipponbare</strain>
    </source>
</reference>
<reference key="2">
    <citation type="journal article" date="2005" name="Nature">
        <title>The map-based sequence of the rice genome.</title>
        <authorList>
            <consortium name="International rice genome sequencing project (IRGSP)"/>
        </authorList>
    </citation>
    <scope>NUCLEOTIDE SEQUENCE [LARGE SCALE GENOMIC DNA]</scope>
    <source>
        <strain>cv. Nipponbare</strain>
    </source>
</reference>
<reference key="3">
    <citation type="journal article" date="2008" name="Nucleic Acids Res.">
        <title>The rice annotation project database (RAP-DB): 2008 update.</title>
        <authorList>
            <consortium name="The rice annotation project (RAP)"/>
        </authorList>
    </citation>
    <scope>GENOME REANNOTATION</scope>
    <source>
        <strain>cv. Nipponbare</strain>
    </source>
</reference>
<reference key="4">
    <citation type="journal article" date="2013" name="Rice">
        <title>Improvement of the Oryza sativa Nipponbare reference genome using next generation sequence and optical map data.</title>
        <authorList>
            <person name="Kawahara Y."/>
            <person name="de la Bastide M."/>
            <person name="Hamilton J.P."/>
            <person name="Kanamori H."/>
            <person name="McCombie W.R."/>
            <person name="Ouyang S."/>
            <person name="Schwartz D.C."/>
            <person name="Tanaka T."/>
            <person name="Wu J."/>
            <person name="Zhou S."/>
            <person name="Childs K.L."/>
            <person name="Davidson R.M."/>
            <person name="Lin H."/>
            <person name="Quesada-Ocampo L."/>
            <person name="Vaillancourt B."/>
            <person name="Sakai H."/>
            <person name="Lee S.S."/>
            <person name="Kim J."/>
            <person name="Numa H."/>
            <person name="Itoh T."/>
            <person name="Buell C.R."/>
            <person name="Matsumoto T."/>
        </authorList>
    </citation>
    <scope>GENOME REANNOTATION</scope>
    <source>
        <strain>cv. Nipponbare</strain>
    </source>
</reference>
<reference key="5">
    <citation type="journal article" date="2006" name="Plant Physiol.">
        <title>Characterization of the plant-specific BREVIS RADIX gene family reveals limited genetic redundancy despite high sequence conservation.</title>
        <authorList>
            <person name="Briggs G.C."/>
            <person name="Mouchel C.F."/>
            <person name="Hardtke C.S."/>
        </authorList>
    </citation>
    <scope>GENE FAMILY</scope>
</reference>
<dbReference type="EMBL" id="AL606683">
    <property type="protein sequence ID" value="CAE03473.2"/>
    <property type="molecule type" value="Genomic_DNA"/>
</dbReference>
<dbReference type="EMBL" id="AP008210">
    <property type="protein sequence ID" value="BAF15675.1"/>
    <property type="molecule type" value="Genomic_DNA"/>
</dbReference>
<dbReference type="EMBL" id="AP014960">
    <property type="protein sequence ID" value="BAS90834.1"/>
    <property type="molecule type" value="Genomic_DNA"/>
</dbReference>
<dbReference type="SMR" id="Q7XPT0"/>
<dbReference type="STRING" id="39947.Q7XPT0"/>
<dbReference type="PaxDb" id="39947-Q7XPT0"/>
<dbReference type="EnsemblPlants" id="Os04t0600500-01">
    <property type="protein sequence ID" value="Os04t0600500-01"/>
    <property type="gene ID" value="Os04g0600500"/>
</dbReference>
<dbReference type="Gramene" id="Os04t0600500-01">
    <property type="protein sequence ID" value="Os04t0600500-01"/>
    <property type="gene ID" value="Os04g0600500"/>
</dbReference>
<dbReference type="KEGG" id="dosa:Os04g0600500"/>
<dbReference type="eggNOG" id="ENOG502QU4N">
    <property type="taxonomic scope" value="Eukaryota"/>
</dbReference>
<dbReference type="HOGENOM" id="CLU_033380_1_0_1"/>
<dbReference type="InParanoid" id="Q7XPT0"/>
<dbReference type="Proteomes" id="UP000000763">
    <property type="component" value="Chromosome 4"/>
</dbReference>
<dbReference type="Proteomes" id="UP000059680">
    <property type="component" value="Chromosome 4"/>
</dbReference>
<dbReference type="GO" id="GO:0005634">
    <property type="term" value="C:nucleus"/>
    <property type="evidence" value="ECO:0007669"/>
    <property type="project" value="UniProtKB-SubCell"/>
</dbReference>
<dbReference type="InterPro" id="IPR013591">
    <property type="entry name" value="Brevis_radix_dom"/>
</dbReference>
<dbReference type="InterPro" id="IPR044532">
    <property type="entry name" value="BRX-like"/>
</dbReference>
<dbReference type="InterPro" id="IPR027988">
    <property type="entry name" value="BRX_N"/>
</dbReference>
<dbReference type="PANTHER" id="PTHR46058:SF11">
    <property type="entry name" value="BRX DOMAIN-CONTAINING PROTEIN"/>
    <property type="match status" value="1"/>
</dbReference>
<dbReference type="PANTHER" id="PTHR46058">
    <property type="entry name" value="PROTEIN BREVIS RADIX-LIKE 1"/>
    <property type="match status" value="1"/>
</dbReference>
<dbReference type="Pfam" id="PF08381">
    <property type="entry name" value="BRX"/>
    <property type="match status" value="1"/>
</dbReference>
<dbReference type="Pfam" id="PF13713">
    <property type="entry name" value="BRX_N"/>
    <property type="match status" value="1"/>
</dbReference>
<dbReference type="PROSITE" id="PS51514">
    <property type="entry name" value="BRX"/>
    <property type="match status" value="1"/>
</dbReference>
<protein>
    <recommendedName>
        <fullName>Putative protein Brevis radix-like 3</fullName>
        <shortName>OsBRXL3</shortName>
    </recommendedName>
</protein>
<sequence length="213" mass="23533">MLACIACSSKEGGEDGSRGAATPHGRDAVKSLTSQLKDMVLKFSGSNKHQHYKAATAGSPSFRSRSYRRPYPGFIDDSAFMTTTRPGGEAYMYTRAAPPPPVRAASTSMATWDMTRSKSNRGWQQDAGRSPGGTTWIQSIEEEAGADDVTVVEDAVPREWTAQVEPGVQITFVTLPGGGNDLKRIRFSRERFGEDRAKVWWEHNRDRIQAQYL</sequence>
<accession>Q7XPT0</accession>
<accession>A0A0P0WEJ6</accession>
<feature type="chain" id="PRO_0000373828" description="Putative protein Brevis radix-like 3">
    <location>
        <begin position="1"/>
        <end position="213"/>
    </location>
</feature>
<feature type="domain" description="BRX" evidence="2">
    <location>
        <begin position="158"/>
        <end position="213"/>
    </location>
</feature>
<feature type="region of interest" description="Disordered" evidence="3">
    <location>
        <begin position="7"/>
        <end position="27"/>
    </location>
</feature>
<name>BRXL3_ORYSJ</name>
<gene>
    <name type="primary">BRXL3</name>
    <name type="ordered locus">Os04g0600500</name>
    <name type="ordered locus">LOC_Os04g51172</name>
    <name type="ORF">OSJNBa0083N12.14</name>
</gene>